<gene>
    <name type="primary">RCAN1</name>
    <name type="synonym">DSCR1</name>
</gene>
<proteinExistence type="evidence at transcript level"/>
<feature type="chain" id="PRO_0000211416" description="Calcipressin-1">
    <location>
        <begin position="1"/>
        <end position="197"/>
    </location>
</feature>
<feature type="region of interest" description="Disordered" evidence="3">
    <location>
        <begin position="163"/>
        <end position="197"/>
    </location>
</feature>
<feature type="compositionally biased region" description="Acidic residues" evidence="3">
    <location>
        <begin position="163"/>
        <end position="173"/>
    </location>
</feature>
<feature type="modified residue" description="Phosphoserine" evidence="1">
    <location>
        <position position="108"/>
    </location>
</feature>
<feature type="modified residue" description="Phosphoserine" evidence="1">
    <location>
        <position position="112"/>
    </location>
</feature>
<feature type="modified residue" description="Phosphoserine" evidence="2">
    <location>
        <position position="163"/>
    </location>
</feature>
<reference key="1">
    <citation type="submission" date="2004-11" db="EMBL/GenBank/DDBJ databases">
        <authorList>
            <consortium name="The German cDNA consortium"/>
        </authorList>
    </citation>
    <scope>NUCLEOTIDE SEQUENCE [LARGE SCALE MRNA]</scope>
    <source>
        <tissue>Kidney</tissue>
    </source>
</reference>
<name>RCAN1_PONAB</name>
<keyword id="KW-0597">Phosphoprotein</keyword>
<keyword id="KW-1185">Reference proteome</keyword>
<comment type="function">
    <text evidence="2">Inhibits calcineurin-dependent transcriptional responses by binding to the catalytic domain of calcineurin A. Could play a role during central nervous system development.</text>
</comment>
<comment type="subunit">
    <text evidence="1 2">Interacts with RAF1, PPP3R1 and PPP3CA.</text>
</comment>
<comment type="PTM">
    <text evidence="1">Phosphorylation increases its ability to inhibit calcineurin and decreases protein half-life.</text>
</comment>
<comment type="similarity">
    <text evidence="4">Belongs to the RCAN family.</text>
</comment>
<accession>Q5RES7</accession>
<organism>
    <name type="scientific">Pongo abelii</name>
    <name type="common">Sumatran orangutan</name>
    <name type="synonym">Pongo pygmaeus abelii</name>
    <dbReference type="NCBI Taxonomy" id="9601"/>
    <lineage>
        <taxon>Eukaryota</taxon>
        <taxon>Metazoa</taxon>
        <taxon>Chordata</taxon>
        <taxon>Craniata</taxon>
        <taxon>Vertebrata</taxon>
        <taxon>Euteleostomi</taxon>
        <taxon>Mammalia</taxon>
        <taxon>Eutheria</taxon>
        <taxon>Euarchontoglires</taxon>
        <taxon>Primates</taxon>
        <taxon>Haplorrhini</taxon>
        <taxon>Catarrhini</taxon>
        <taxon>Hominidae</taxon>
        <taxon>Pongo</taxon>
    </lineage>
</organism>
<dbReference type="EMBL" id="CR857439">
    <property type="protein sequence ID" value="CAH89730.1"/>
    <property type="molecule type" value="mRNA"/>
</dbReference>
<dbReference type="RefSeq" id="NP_001124789.1">
    <property type="nucleotide sequence ID" value="NM_001131317.1"/>
</dbReference>
<dbReference type="SMR" id="Q5RES7"/>
<dbReference type="STRING" id="9601.ENSPPYP00000012717"/>
<dbReference type="GeneID" id="100171642"/>
<dbReference type="KEGG" id="pon:100171642"/>
<dbReference type="CTD" id="1827"/>
<dbReference type="eggNOG" id="KOG4019">
    <property type="taxonomic scope" value="Eukaryota"/>
</dbReference>
<dbReference type="InParanoid" id="Q5RES7"/>
<dbReference type="OrthoDB" id="17212at2759"/>
<dbReference type="Proteomes" id="UP000001595">
    <property type="component" value="Unplaced"/>
</dbReference>
<dbReference type="GO" id="GO:0005737">
    <property type="term" value="C:cytoplasm"/>
    <property type="evidence" value="ECO:0007669"/>
    <property type="project" value="TreeGrafter"/>
</dbReference>
<dbReference type="GO" id="GO:0005634">
    <property type="term" value="C:nucleus"/>
    <property type="evidence" value="ECO:0007669"/>
    <property type="project" value="TreeGrafter"/>
</dbReference>
<dbReference type="GO" id="GO:0008597">
    <property type="term" value="F:calcium-dependent protein serine/threonine phosphatase regulator activity"/>
    <property type="evidence" value="ECO:0007669"/>
    <property type="project" value="TreeGrafter"/>
</dbReference>
<dbReference type="GO" id="GO:0003676">
    <property type="term" value="F:nucleic acid binding"/>
    <property type="evidence" value="ECO:0007669"/>
    <property type="project" value="InterPro"/>
</dbReference>
<dbReference type="GO" id="GO:0019722">
    <property type="term" value="P:calcium-mediated signaling"/>
    <property type="evidence" value="ECO:0007669"/>
    <property type="project" value="InterPro"/>
</dbReference>
<dbReference type="GO" id="GO:0070885">
    <property type="term" value="P:negative regulation of calcineurin-NFAT signaling cascade"/>
    <property type="evidence" value="ECO:0000250"/>
    <property type="project" value="UniProtKB"/>
</dbReference>
<dbReference type="CDD" id="cd12708">
    <property type="entry name" value="RRM_RCAN1"/>
    <property type="match status" value="1"/>
</dbReference>
<dbReference type="FunFam" id="3.30.70.330:FF:000221">
    <property type="entry name" value="calcipressin-1 isoform X1"/>
    <property type="match status" value="1"/>
</dbReference>
<dbReference type="Gene3D" id="3.30.70.330">
    <property type="match status" value="1"/>
</dbReference>
<dbReference type="InterPro" id="IPR006931">
    <property type="entry name" value="Calcipressin"/>
</dbReference>
<dbReference type="InterPro" id="IPR012677">
    <property type="entry name" value="Nucleotide-bd_a/b_plait_sf"/>
</dbReference>
<dbReference type="InterPro" id="IPR035979">
    <property type="entry name" value="RBD_domain_sf"/>
</dbReference>
<dbReference type="InterPro" id="IPR034906">
    <property type="entry name" value="RCAN1_RRM"/>
</dbReference>
<dbReference type="PANTHER" id="PTHR10300">
    <property type="entry name" value="CALCIPRESSIN"/>
    <property type="match status" value="1"/>
</dbReference>
<dbReference type="PANTHER" id="PTHR10300:SF4">
    <property type="entry name" value="CALCIPRESSIN-1"/>
    <property type="match status" value="1"/>
</dbReference>
<dbReference type="Pfam" id="PF04847">
    <property type="entry name" value="Calcipressin"/>
    <property type="match status" value="1"/>
</dbReference>
<dbReference type="SUPFAM" id="SSF54928">
    <property type="entry name" value="RNA-binding domain, RBD"/>
    <property type="match status" value="1"/>
</dbReference>
<evidence type="ECO:0000250" key="1">
    <source>
        <dbReference type="UniProtKB" id="P53805"/>
    </source>
</evidence>
<evidence type="ECO:0000250" key="2">
    <source>
        <dbReference type="UniProtKB" id="Q9JHG6"/>
    </source>
</evidence>
<evidence type="ECO:0000256" key="3">
    <source>
        <dbReference type="SAM" id="MobiDB-lite"/>
    </source>
</evidence>
<evidence type="ECO:0000305" key="4"/>
<protein>
    <recommendedName>
        <fullName>Calcipressin-1</fullName>
    </recommendedName>
    <alternativeName>
        <fullName>Down syndrome critical region protein 1 homolog</fullName>
    </alternativeName>
    <alternativeName>
        <fullName>Regulator of calcineurin 1</fullName>
    </alternativeName>
</protein>
<sequence>MHFRNFNYSFSSLIACVANSDIFSESETRAKFESLFRTYDKDITFQYFKSFKRVRINFSNPFSAANARLQLHKTEFLGKEMKLYFAQTLHIGSSHLAPPNPDKQFLISPPASPPVGWKQVEDATPVINYDLLYAISKLGPGEKYELHAATDTTPSVVVHVCESDQEKEEEEEMERMKRPKPKIIQTRRPEYTPIHLS</sequence>